<sequence length="166" mass="17779">MSNHDQKRDEGYIEKLVQVNRVAKTVKGGRIFTFTALTVVGDGKGRVGFGRGKSREVPAAIQKAMEAARRNMIQVDLNCTTLQYAMKSAHGASKVYMQPASEGTGIIAGGAMRAVLEVAGVQNVLAKCYGSTNPVNVVHATFKGLKGMQSPESIAAKRGKRVEEII</sequence>
<organism>
    <name type="scientific">Pseudomonas savastanoi pv. phaseolicola (strain 1448A / Race 6)</name>
    <name type="common">Pseudomonas syringae pv. phaseolicola (strain 1448A / Race 6)</name>
    <dbReference type="NCBI Taxonomy" id="264730"/>
    <lineage>
        <taxon>Bacteria</taxon>
        <taxon>Pseudomonadati</taxon>
        <taxon>Pseudomonadota</taxon>
        <taxon>Gammaproteobacteria</taxon>
        <taxon>Pseudomonadales</taxon>
        <taxon>Pseudomonadaceae</taxon>
        <taxon>Pseudomonas</taxon>
    </lineage>
</organism>
<proteinExistence type="inferred from homology"/>
<feature type="chain" id="PRO_0000230362" description="Small ribosomal subunit protein uS5">
    <location>
        <begin position="1"/>
        <end position="166"/>
    </location>
</feature>
<feature type="domain" description="S5 DRBM" evidence="1">
    <location>
        <begin position="12"/>
        <end position="75"/>
    </location>
</feature>
<reference key="1">
    <citation type="journal article" date="2005" name="J. Bacteriol.">
        <title>Whole-genome sequence analysis of Pseudomonas syringae pv. phaseolicola 1448A reveals divergence among pathovars in genes involved in virulence and transposition.</title>
        <authorList>
            <person name="Joardar V."/>
            <person name="Lindeberg M."/>
            <person name="Jackson R.W."/>
            <person name="Selengut J."/>
            <person name="Dodson R."/>
            <person name="Brinkac L.M."/>
            <person name="Daugherty S.C."/>
            <person name="DeBoy R.T."/>
            <person name="Durkin A.S."/>
            <person name="Gwinn Giglio M."/>
            <person name="Madupu R."/>
            <person name="Nelson W.C."/>
            <person name="Rosovitz M.J."/>
            <person name="Sullivan S.A."/>
            <person name="Crabtree J."/>
            <person name="Creasy T."/>
            <person name="Davidsen T.M."/>
            <person name="Haft D.H."/>
            <person name="Zafar N."/>
            <person name="Zhou L."/>
            <person name="Halpin R."/>
            <person name="Holley T."/>
            <person name="Khouri H.M."/>
            <person name="Feldblyum T.V."/>
            <person name="White O."/>
            <person name="Fraser C.M."/>
            <person name="Chatterjee A.K."/>
            <person name="Cartinhour S."/>
            <person name="Schneider D."/>
            <person name="Mansfield J.W."/>
            <person name="Collmer A."/>
            <person name="Buell R."/>
        </authorList>
    </citation>
    <scope>NUCLEOTIDE SEQUENCE [LARGE SCALE GENOMIC DNA]</scope>
    <source>
        <strain>1448A / Race 6</strain>
    </source>
</reference>
<keyword id="KW-0687">Ribonucleoprotein</keyword>
<keyword id="KW-0689">Ribosomal protein</keyword>
<keyword id="KW-0694">RNA-binding</keyword>
<keyword id="KW-0699">rRNA-binding</keyword>
<dbReference type="EMBL" id="CP000058">
    <property type="protein sequence ID" value="AAZ37385.1"/>
    <property type="molecule type" value="Genomic_DNA"/>
</dbReference>
<dbReference type="RefSeq" id="WP_011169627.1">
    <property type="nucleotide sequence ID" value="NC_005773.3"/>
</dbReference>
<dbReference type="SMR" id="Q48D53"/>
<dbReference type="KEGG" id="psp:PSPPH_4575"/>
<dbReference type="eggNOG" id="COG0098">
    <property type="taxonomic scope" value="Bacteria"/>
</dbReference>
<dbReference type="HOGENOM" id="CLU_065898_2_2_6"/>
<dbReference type="Proteomes" id="UP000000551">
    <property type="component" value="Chromosome"/>
</dbReference>
<dbReference type="GO" id="GO:0015935">
    <property type="term" value="C:small ribosomal subunit"/>
    <property type="evidence" value="ECO:0007669"/>
    <property type="project" value="InterPro"/>
</dbReference>
<dbReference type="GO" id="GO:0019843">
    <property type="term" value="F:rRNA binding"/>
    <property type="evidence" value="ECO:0007669"/>
    <property type="project" value="UniProtKB-UniRule"/>
</dbReference>
<dbReference type="GO" id="GO:0003735">
    <property type="term" value="F:structural constituent of ribosome"/>
    <property type="evidence" value="ECO:0007669"/>
    <property type="project" value="InterPro"/>
</dbReference>
<dbReference type="GO" id="GO:0006412">
    <property type="term" value="P:translation"/>
    <property type="evidence" value="ECO:0007669"/>
    <property type="project" value="UniProtKB-UniRule"/>
</dbReference>
<dbReference type="FunFam" id="3.30.160.20:FF:000001">
    <property type="entry name" value="30S ribosomal protein S5"/>
    <property type="match status" value="1"/>
</dbReference>
<dbReference type="FunFam" id="3.30.230.10:FF:000002">
    <property type="entry name" value="30S ribosomal protein S5"/>
    <property type="match status" value="1"/>
</dbReference>
<dbReference type="Gene3D" id="3.30.160.20">
    <property type="match status" value="1"/>
</dbReference>
<dbReference type="Gene3D" id="3.30.230.10">
    <property type="match status" value="1"/>
</dbReference>
<dbReference type="HAMAP" id="MF_01307_B">
    <property type="entry name" value="Ribosomal_uS5_B"/>
    <property type="match status" value="1"/>
</dbReference>
<dbReference type="InterPro" id="IPR020568">
    <property type="entry name" value="Ribosomal_Su5_D2-typ_SF"/>
</dbReference>
<dbReference type="InterPro" id="IPR000851">
    <property type="entry name" value="Ribosomal_uS5"/>
</dbReference>
<dbReference type="InterPro" id="IPR005712">
    <property type="entry name" value="Ribosomal_uS5_bac-type"/>
</dbReference>
<dbReference type="InterPro" id="IPR005324">
    <property type="entry name" value="Ribosomal_uS5_C"/>
</dbReference>
<dbReference type="InterPro" id="IPR013810">
    <property type="entry name" value="Ribosomal_uS5_N"/>
</dbReference>
<dbReference type="InterPro" id="IPR018192">
    <property type="entry name" value="Ribosomal_uS5_N_CS"/>
</dbReference>
<dbReference type="InterPro" id="IPR014721">
    <property type="entry name" value="Ribsml_uS5_D2-typ_fold_subgr"/>
</dbReference>
<dbReference type="NCBIfam" id="TIGR01021">
    <property type="entry name" value="rpsE_bact"/>
    <property type="match status" value="1"/>
</dbReference>
<dbReference type="PANTHER" id="PTHR48432">
    <property type="entry name" value="S5 DRBM DOMAIN-CONTAINING PROTEIN"/>
    <property type="match status" value="1"/>
</dbReference>
<dbReference type="PANTHER" id="PTHR48432:SF1">
    <property type="entry name" value="S5 DRBM DOMAIN-CONTAINING PROTEIN"/>
    <property type="match status" value="1"/>
</dbReference>
<dbReference type="Pfam" id="PF00333">
    <property type="entry name" value="Ribosomal_S5"/>
    <property type="match status" value="1"/>
</dbReference>
<dbReference type="Pfam" id="PF03719">
    <property type="entry name" value="Ribosomal_S5_C"/>
    <property type="match status" value="1"/>
</dbReference>
<dbReference type="SUPFAM" id="SSF54768">
    <property type="entry name" value="dsRNA-binding domain-like"/>
    <property type="match status" value="1"/>
</dbReference>
<dbReference type="SUPFAM" id="SSF54211">
    <property type="entry name" value="Ribosomal protein S5 domain 2-like"/>
    <property type="match status" value="1"/>
</dbReference>
<dbReference type="PROSITE" id="PS00585">
    <property type="entry name" value="RIBOSOMAL_S5"/>
    <property type="match status" value="1"/>
</dbReference>
<dbReference type="PROSITE" id="PS50881">
    <property type="entry name" value="S5_DSRBD"/>
    <property type="match status" value="1"/>
</dbReference>
<comment type="function">
    <text evidence="1">With S4 and S12 plays an important role in translational accuracy.</text>
</comment>
<comment type="function">
    <text evidence="1">Located at the back of the 30S subunit body where it stabilizes the conformation of the head with respect to the body.</text>
</comment>
<comment type="subunit">
    <text evidence="1">Part of the 30S ribosomal subunit. Contacts proteins S4 and S8.</text>
</comment>
<comment type="domain">
    <text>The N-terminal domain interacts with the head of the 30S subunit; the C-terminal domain interacts with the body and contacts protein S4. The interaction surface between S4 and S5 is involved in control of translational fidelity.</text>
</comment>
<comment type="similarity">
    <text evidence="1">Belongs to the universal ribosomal protein uS5 family.</text>
</comment>
<gene>
    <name evidence="1" type="primary">rpsE</name>
    <name type="ordered locus">PSPPH_4575</name>
</gene>
<evidence type="ECO:0000255" key="1">
    <source>
        <dbReference type="HAMAP-Rule" id="MF_01307"/>
    </source>
</evidence>
<evidence type="ECO:0000305" key="2"/>
<name>RS5_PSE14</name>
<accession>Q48D53</accession>
<protein>
    <recommendedName>
        <fullName evidence="1">Small ribosomal subunit protein uS5</fullName>
    </recommendedName>
    <alternativeName>
        <fullName evidence="2">30S ribosomal protein S5</fullName>
    </alternativeName>
</protein>